<accession>B4SBV1</accession>
<feature type="chain" id="PRO_0000354297" description="Small ribosomal subunit protein uS19">
    <location>
        <begin position="1"/>
        <end position="99"/>
    </location>
</feature>
<feature type="region of interest" description="Disordered" evidence="2">
    <location>
        <begin position="76"/>
        <end position="99"/>
    </location>
</feature>
<keyword id="KW-1185">Reference proteome</keyword>
<keyword id="KW-0687">Ribonucleoprotein</keyword>
<keyword id="KW-0689">Ribosomal protein</keyword>
<keyword id="KW-0694">RNA-binding</keyword>
<keyword id="KW-0699">rRNA-binding</keyword>
<reference key="1">
    <citation type="submission" date="2008-06" db="EMBL/GenBank/DDBJ databases">
        <title>Complete sequence of Pelodictyon phaeoclathratiforme BU-1.</title>
        <authorList>
            <consortium name="US DOE Joint Genome Institute"/>
            <person name="Lucas S."/>
            <person name="Copeland A."/>
            <person name="Lapidus A."/>
            <person name="Glavina del Rio T."/>
            <person name="Dalin E."/>
            <person name="Tice H."/>
            <person name="Bruce D."/>
            <person name="Goodwin L."/>
            <person name="Pitluck S."/>
            <person name="Schmutz J."/>
            <person name="Larimer F."/>
            <person name="Land M."/>
            <person name="Hauser L."/>
            <person name="Kyrpides N."/>
            <person name="Mikhailova N."/>
            <person name="Liu Z."/>
            <person name="Li T."/>
            <person name="Zhao F."/>
            <person name="Overmann J."/>
            <person name="Bryant D.A."/>
            <person name="Richardson P."/>
        </authorList>
    </citation>
    <scope>NUCLEOTIDE SEQUENCE [LARGE SCALE GENOMIC DNA]</scope>
    <source>
        <strain>DSM 5477 / BU-1</strain>
    </source>
</reference>
<protein>
    <recommendedName>
        <fullName evidence="1">Small ribosomal subunit protein uS19</fullName>
    </recommendedName>
    <alternativeName>
        <fullName evidence="3">30S ribosomal protein S19</fullName>
    </alternativeName>
</protein>
<dbReference type="EMBL" id="CP001110">
    <property type="protein sequence ID" value="ACF42626.1"/>
    <property type="molecule type" value="Genomic_DNA"/>
</dbReference>
<dbReference type="RefSeq" id="WP_012507122.1">
    <property type="nucleotide sequence ID" value="NC_011060.1"/>
</dbReference>
<dbReference type="SMR" id="B4SBV1"/>
<dbReference type="STRING" id="324925.Ppha_0293"/>
<dbReference type="KEGG" id="pph:Ppha_0293"/>
<dbReference type="eggNOG" id="COG0185">
    <property type="taxonomic scope" value="Bacteria"/>
</dbReference>
<dbReference type="HOGENOM" id="CLU_144911_0_1_10"/>
<dbReference type="OrthoDB" id="9797833at2"/>
<dbReference type="Proteomes" id="UP000002724">
    <property type="component" value="Chromosome"/>
</dbReference>
<dbReference type="GO" id="GO:0005737">
    <property type="term" value="C:cytoplasm"/>
    <property type="evidence" value="ECO:0007669"/>
    <property type="project" value="UniProtKB-ARBA"/>
</dbReference>
<dbReference type="GO" id="GO:0015935">
    <property type="term" value="C:small ribosomal subunit"/>
    <property type="evidence" value="ECO:0007669"/>
    <property type="project" value="InterPro"/>
</dbReference>
<dbReference type="GO" id="GO:0019843">
    <property type="term" value="F:rRNA binding"/>
    <property type="evidence" value="ECO:0007669"/>
    <property type="project" value="UniProtKB-UniRule"/>
</dbReference>
<dbReference type="GO" id="GO:0003735">
    <property type="term" value="F:structural constituent of ribosome"/>
    <property type="evidence" value="ECO:0007669"/>
    <property type="project" value="InterPro"/>
</dbReference>
<dbReference type="GO" id="GO:0000028">
    <property type="term" value="P:ribosomal small subunit assembly"/>
    <property type="evidence" value="ECO:0007669"/>
    <property type="project" value="TreeGrafter"/>
</dbReference>
<dbReference type="GO" id="GO:0006412">
    <property type="term" value="P:translation"/>
    <property type="evidence" value="ECO:0007669"/>
    <property type="project" value="UniProtKB-UniRule"/>
</dbReference>
<dbReference type="FunFam" id="3.30.860.10:FF:000001">
    <property type="entry name" value="30S ribosomal protein S19"/>
    <property type="match status" value="1"/>
</dbReference>
<dbReference type="Gene3D" id="3.30.860.10">
    <property type="entry name" value="30s Ribosomal Protein S19, Chain A"/>
    <property type="match status" value="1"/>
</dbReference>
<dbReference type="HAMAP" id="MF_00531">
    <property type="entry name" value="Ribosomal_uS19"/>
    <property type="match status" value="1"/>
</dbReference>
<dbReference type="InterPro" id="IPR002222">
    <property type="entry name" value="Ribosomal_uS19"/>
</dbReference>
<dbReference type="InterPro" id="IPR005732">
    <property type="entry name" value="Ribosomal_uS19_bac-type"/>
</dbReference>
<dbReference type="InterPro" id="IPR020934">
    <property type="entry name" value="Ribosomal_uS19_CS"/>
</dbReference>
<dbReference type="InterPro" id="IPR023575">
    <property type="entry name" value="Ribosomal_uS19_SF"/>
</dbReference>
<dbReference type="NCBIfam" id="TIGR01050">
    <property type="entry name" value="rpsS_bact"/>
    <property type="match status" value="1"/>
</dbReference>
<dbReference type="PANTHER" id="PTHR11880">
    <property type="entry name" value="RIBOSOMAL PROTEIN S19P FAMILY MEMBER"/>
    <property type="match status" value="1"/>
</dbReference>
<dbReference type="PANTHER" id="PTHR11880:SF8">
    <property type="entry name" value="SMALL RIBOSOMAL SUBUNIT PROTEIN US19M"/>
    <property type="match status" value="1"/>
</dbReference>
<dbReference type="Pfam" id="PF00203">
    <property type="entry name" value="Ribosomal_S19"/>
    <property type="match status" value="1"/>
</dbReference>
<dbReference type="PIRSF" id="PIRSF002144">
    <property type="entry name" value="Ribosomal_S19"/>
    <property type="match status" value="1"/>
</dbReference>
<dbReference type="PRINTS" id="PR00975">
    <property type="entry name" value="RIBOSOMALS19"/>
</dbReference>
<dbReference type="SUPFAM" id="SSF54570">
    <property type="entry name" value="Ribosomal protein S19"/>
    <property type="match status" value="1"/>
</dbReference>
<dbReference type="PROSITE" id="PS00323">
    <property type="entry name" value="RIBOSOMAL_S19"/>
    <property type="match status" value="1"/>
</dbReference>
<name>RS19_PELPB</name>
<comment type="function">
    <text evidence="1">Protein S19 forms a complex with S13 that binds strongly to the 16S ribosomal RNA.</text>
</comment>
<comment type="similarity">
    <text evidence="1">Belongs to the universal ribosomal protein uS19 family.</text>
</comment>
<proteinExistence type="inferred from homology"/>
<organism>
    <name type="scientific">Pelodictyon phaeoclathratiforme (strain DSM 5477 / BU-1)</name>
    <dbReference type="NCBI Taxonomy" id="324925"/>
    <lineage>
        <taxon>Bacteria</taxon>
        <taxon>Pseudomonadati</taxon>
        <taxon>Chlorobiota</taxon>
        <taxon>Chlorobiia</taxon>
        <taxon>Chlorobiales</taxon>
        <taxon>Chlorobiaceae</taxon>
        <taxon>Chlorobium/Pelodictyon group</taxon>
        <taxon>Pelodictyon</taxon>
    </lineage>
</organism>
<sequence length="99" mass="10823">MPRSLKKGPFIDIKLEKRILDMNSKGEKKVIKTWSRSSMISPDFVGHTVAVHNGKNHVPVYVGDNMVGHKLGEFAPTRSFRGHAGGGKAEKGGSAPRKK</sequence>
<gene>
    <name evidence="1" type="primary">rpsS</name>
    <name type="ordered locus">Ppha_0293</name>
</gene>
<evidence type="ECO:0000255" key="1">
    <source>
        <dbReference type="HAMAP-Rule" id="MF_00531"/>
    </source>
</evidence>
<evidence type="ECO:0000256" key="2">
    <source>
        <dbReference type="SAM" id="MobiDB-lite"/>
    </source>
</evidence>
<evidence type="ECO:0000305" key="3"/>